<reference key="1">
    <citation type="journal article" date="2004" name="Proc. Natl. Acad. Sci. U.S.A.">
        <title>Genome sequence of the enterobacterial phytopathogen Erwinia carotovora subsp. atroseptica and characterization of virulence factors.</title>
        <authorList>
            <person name="Bell K.S."/>
            <person name="Sebaihia M."/>
            <person name="Pritchard L."/>
            <person name="Holden M.T.G."/>
            <person name="Hyman L.J."/>
            <person name="Holeva M.C."/>
            <person name="Thomson N.R."/>
            <person name="Bentley S.D."/>
            <person name="Churcher L.J.C."/>
            <person name="Mungall K."/>
            <person name="Atkin R."/>
            <person name="Bason N."/>
            <person name="Brooks K."/>
            <person name="Chillingworth T."/>
            <person name="Clark K."/>
            <person name="Doggett J."/>
            <person name="Fraser A."/>
            <person name="Hance Z."/>
            <person name="Hauser H."/>
            <person name="Jagels K."/>
            <person name="Moule S."/>
            <person name="Norbertczak H."/>
            <person name="Ormond D."/>
            <person name="Price C."/>
            <person name="Quail M.A."/>
            <person name="Sanders M."/>
            <person name="Walker D."/>
            <person name="Whitehead S."/>
            <person name="Salmond G.P.C."/>
            <person name="Birch P.R.J."/>
            <person name="Parkhill J."/>
            <person name="Toth I.K."/>
        </authorList>
    </citation>
    <scope>NUCLEOTIDE SEQUENCE [LARGE SCALE GENOMIC DNA]</scope>
    <source>
        <strain>SCRI 1043 / ATCC BAA-672</strain>
    </source>
</reference>
<dbReference type="EMBL" id="BX950851">
    <property type="protein sequence ID" value="CAG76256.1"/>
    <property type="molecule type" value="Genomic_DNA"/>
</dbReference>
<dbReference type="RefSeq" id="WP_011094871.1">
    <property type="nucleotide sequence ID" value="NC_004547.2"/>
</dbReference>
<dbReference type="SMR" id="Q6D1T9"/>
<dbReference type="STRING" id="218491.ECA3358"/>
<dbReference type="GeneID" id="57210053"/>
<dbReference type="KEGG" id="eca:ECA3358"/>
<dbReference type="PATRIC" id="fig|218491.5.peg.3409"/>
<dbReference type="eggNOG" id="COG0806">
    <property type="taxonomic scope" value="Bacteria"/>
</dbReference>
<dbReference type="HOGENOM" id="CLU_077636_1_0_6"/>
<dbReference type="OrthoDB" id="9783509at2"/>
<dbReference type="Proteomes" id="UP000007966">
    <property type="component" value="Chromosome"/>
</dbReference>
<dbReference type="GO" id="GO:0005737">
    <property type="term" value="C:cytoplasm"/>
    <property type="evidence" value="ECO:0007669"/>
    <property type="project" value="UniProtKB-SubCell"/>
</dbReference>
<dbReference type="GO" id="GO:0005840">
    <property type="term" value="C:ribosome"/>
    <property type="evidence" value="ECO:0007669"/>
    <property type="project" value="InterPro"/>
</dbReference>
<dbReference type="GO" id="GO:0043022">
    <property type="term" value="F:ribosome binding"/>
    <property type="evidence" value="ECO:0007669"/>
    <property type="project" value="InterPro"/>
</dbReference>
<dbReference type="GO" id="GO:0042274">
    <property type="term" value="P:ribosomal small subunit biogenesis"/>
    <property type="evidence" value="ECO:0007669"/>
    <property type="project" value="UniProtKB-UniRule"/>
</dbReference>
<dbReference type="GO" id="GO:0006364">
    <property type="term" value="P:rRNA processing"/>
    <property type="evidence" value="ECO:0007669"/>
    <property type="project" value="UniProtKB-UniRule"/>
</dbReference>
<dbReference type="FunFam" id="2.40.30.60:FF:000001">
    <property type="entry name" value="Ribosome maturation factor RimM"/>
    <property type="match status" value="1"/>
</dbReference>
<dbReference type="Gene3D" id="2.30.30.240">
    <property type="entry name" value="PRC-barrel domain"/>
    <property type="match status" value="1"/>
</dbReference>
<dbReference type="Gene3D" id="2.40.30.60">
    <property type="entry name" value="RimM"/>
    <property type="match status" value="1"/>
</dbReference>
<dbReference type="HAMAP" id="MF_00014">
    <property type="entry name" value="Ribosome_mat_RimM"/>
    <property type="match status" value="1"/>
</dbReference>
<dbReference type="InterPro" id="IPR011033">
    <property type="entry name" value="PRC_barrel-like_sf"/>
</dbReference>
<dbReference type="InterPro" id="IPR056792">
    <property type="entry name" value="PRC_RimM"/>
</dbReference>
<dbReference type="InterPro" id="IPR011961">
    <property type="entry name" value="RimM"/>
</dbReference>
<dbReference type="InterPro" id="IPR002676">
    <property type="entry name" value="RimM_N"/>
</dbReference>
<dbReference type="InterPro" id="IPR036976">
    <property type="entry name" value="RimM_N_sf"/>
</dbReference>
<dbReference type="InterPro" id="IPR009000">
    <property type="entry name" value="Transl_B-barrel_sf"/>
</dbReference>
<dbReference type="NCBIfam" id="TIGR02273">
    <property type="entry name" value="16S_RimM"/>
    <property type="match status" value="1"/>
</dbReference>
<dbReference type="PANTHER" id="PTHR33692">
    <property type="entry name" value="RIBOSOME MATURATION FACTOR RIMM"/>
    <property type="match status" value="1"/>
</dbReference>
<dbReference type="PANTHER" id="PTHR33692:SF1">
    <property type="entry name" value="RIBOSOME MATURATION FACTOR RIMM"/>
    <property type="match status" value="1"/>
</dbReference>
<dbReference type="Pfam" id="PF24986">
    <property type="entry name" value="PRC_RimM"/>
    <property type="match status" value="1"/>
</dbReference>
<dbReference type="Pfam" id="PF01782">
    <property type="entry name" value="RimM"/>
    <property type="match status" value="1"/>
</dbReference>
<dbReference type="SUPFAM" id="SSF50346">
    <property type="entry name" value="PRC-barrel domain"/>
    <property type="match status" value="1"/>
</dbReference>
<dbReference type="SUPFAM" id="SSF50447">
    <property type="entry name" value="Translation proteins"/>
    <property type="match status" value="1"/>
</dbReference>
<comment type="function">
    <text evidence="1">An accessory protein needed during the final step in the assembly of 30S ribosomal subunit, possibly for assembly of the head region. Essential for efficient processing of 16S rRNA. May be needed both before and after RbfA during the maturation of 16S rRNA. It has affinity for free ribosomal 30S subunits but not for 70S ribosomes.</text>
</comment>
<comment type="subunit">
    <text evidence="1">Binds ribosomal protein uS19.</text>
</comment>
<comment type="subcellular location">
    <subcellularLocation>
        <location evidence="1">Cytoplasm</location>
    </subcellularLocation>
</comment>
<comment type="domain">
    <text evidence="1">The PRC barrel domain binds ribosomal protein uS19.</text>
</comment>
<comment type="similarity">
    <text evidence="1">Belongs to the RimM family.</text>
</comment>
<feature type="chain" id="PRO_0000163290" description="Ribosome maturation factor RimM">
    <location>
        <begin position="1"/>
        <end position="182"/>
    </location>
</feature>
<feature type="domain" description="PRC barrel" evidence="1">
    <location>
        <begin position="103"/>
        <end position="182"/>
    </location>
</feature>
<name>RIMM_PECAS</name>
<keyword id="KW-0143">Chaperone</keyword>
<keyword id="KW-0963">Cytoplasm</keyword>
<keyword id="KW-1185">Reference proteome</keyword>
<keyword id="KW-0690">Ribosome biogenesis</keyword>
<keyword id="KW-0698">rRNA processing</keyword>
<gene>
    <name evidence="1" type="primary">rimM</name>
    <name type="ordered locus">ECA3358</name>
</gene>
<evidence type="ECO:0000255" key="1">
    <source>
        <dbReference type="HAMAP-Rule" id="MF_00014"/>
    </source>
</evidence>
<protein>
    <recommendedName>
        <fullName evidence="1">Ribosome maturation factor RimM</fullName>
    </recommendedName>
</protein>
<accession>Q6D1T9</accession>
<proteinExistence type="inferred from homology"/>
<sequence>MSNQLSPKPPVNPIVMGKIGSAYGIRGWLRVFSSTEDADSIFDYQPWFIQSKSGWQLVEIEGWKYHNQDLIIKVKGADDRDAANLLTNCEIVVDSSQLPDLGVGDYYWKDLIGCQVVTVTGYELGKIIDMMETGSNDVMVIKANLKDAFGVKERLVPFLTEQVVKRVDLSAQTIEVDWDPGF</sequence>
<organism>
    <name type="scientific">Pectobacterium atrosepticum (strain SCRI 1043 / ATCC BAA-672)</name>
    <name type="common">Erwinia carotovora subsp. atroseptica</name>
    <dbReference type="NCBI Taxonomy" id="218491"/>
    <lineage>
        <taxon>Bacteria</taxon>
        <taxon>Pseudomonadati</taxon>
        <taxon>Pseudomonadota</taxon>
        <taxon>Gammaproteobacteria</taxon>
        <taxon>Enterobacterales</taxon>
        <taxon>Pectobacteriaceae</taxon>
        <taxon>Pectobacterium</taxon>
    </lineage>
</organism>